<comment type="function">
    <text evidence="1">Involved in cytoplasm to vacuole transport (Cvt) and autophagic vesicle formation. Autophagy is essential for maintenance of amino acid levels and protein synthesis under nitrogen starvation. Required for selective autophagic degradation of the nucleus (nucleophagy). Also required for mitophagy, which eliminates defective or superfluous mitochondria in order to fulfill cellular energy requirements and prevent excess ROS production. Conjugation with ATG12, through a ubiquitin-like conjugating system involving ATG7 as an E1-like activating enzyme and ATG10 as an E2-like conjugating enzyme, is essential for its function. The ATG12-ATG5 conjugate acts as an E3-like enzyme which is required for lipidation of ATG8 and ATG8 association to the vesicle membranes (By similarity).</text>
</comment>
<comment type="subunit">
    <text evidence="1">Conjugated with ATG12.</text>
</comment>
<comment type="subcellular location">
    <subcellularLocation>
        <location evidence="1">Preautophagosomal structure membrane</location>
        <topology evidence="1">Peripheral membrane protein</topology>
    </subcellularLocation>
</comment>
<comment type="PTM">
    <text evidence="1">Conjugated to ATG12; which is essential for autophagy.</text>
</comment>
<comment type="similarity">
    <text evidence="3">Belongs to the ATG5 family.</text>
</comment>
<evidence type="ECO:0000250" key="1"/>
<evidence type="ECO:0000256" key="2">
    <source>
        <dbReference type="SAM" id="MobiDB-lite"/>
    </source>
</evidence>
<evidence type="ECO:0000305" key="3"/>
<accession>Q1DP17</accession>
<accession>J0HFW6</accession>
<reference key="1">
    <citation type="journal article" date="2009" name="Genome Res.">
        <title>Comparative genomic analyses of the human fungal pathogens Coccidioides and their relatives.</title>
        <authorList>
            <person name="Sharpton T.J."/>
            <person name="Stajich J.E."/>
            <person name="Rounsley S.D."/>
            <person name="Gardner M.J."/>
            <person name="Wortman J.R."/>
            <person name="Jordar V.S."/>
            <person name="Maiti R."/>
            <person name="Kodira C.D."/>
            <person name="Neafsey D.E."/>
            <person name="Zeng Q."/>
            <person name="Hung C.-Y."/>
            <person name="McMahan C."/>
            <person name="Muszewska A."/>
            <person name="Grynberg M."/>
            <person name="Mandel M.A."/>
            <person name="Kellner E.M."/>
            <person name="Barker B.M."/>
            <person name="Galgiani J.N."/>
            <person name="Orbach M.J."/>
            <person name="Kirkland T.N."/>
            <person name="Cole G.T."/>
            <person name="Henn M.R."/>
            <person name="Birren B.W."/>
            <person name="Taylor J.W."/>
        </authorList>
    </citation>
    <scope>NUCLEOTIDE SEQUENCE [LARGE SCALE GENOMIC DNA]</scope>
    <source>
        <strain>RS</strain>
    </source>
</reference>
<reference key="2">
    <citation type="journal article" date="2010" name="Genome Res.">
        <title>Population genomic sequencing of Coccidioides fungi reveals recent hybridization and transposon control.</title>
        <authorList>
            <person name="Neafsey D.E."/>
            <person name="Barker B.M."/>
            <person name="Sharpton T.J."/>
            <person name="Stajich J.E."/>
            <person name="Park D.J."/>
            <person name="Whiston E."/>
            <person name="Hung C.-Y."/>
            <person name="McMahan C."/>
            <person name="White J."/>
            <person name="Sykes S."/>
            <person name="Heiman D."/>
            <person name="Young S."/>
            <person name="Zeng Q."/>
            <person name="Abouelleil A."/>
            <person name="Aftuck L."/>
            <person name="Bessette D."/>
            <person name="Brown A."/>
            <person name="FitzGerald M."/>
            <person name="Lui A."/>
            <person name="Macdonald J.P."/>
            <person name="Priest M."/>
            <person name="Orbach M.J."/>
            <person name="Galgiani J.N."/>
            <person name="Kirkland T.N."/>
            <person name="Cole G.T."/>
            <person name="Birren B.W."/>
            <person name="Henn M.R."/>
            <person name="Taylor J.W."/>
            <person name="Rounsley S.D."/>
        </authorList>
    </citation>
    <scope>GENOME REANNOTATION</scope>
    <source>
        <strain>RS</strain>
    </source>
</reference>
<organism>
    <name type="scientific">Coccidioides immitis (strain RS)</name>
    <name type="common">Valley fever fungus</name>
    <dbReference type="NCBI Taxonomy" id="246410"/>
    <lineage>
        <taxon>Eukaryota</taxon>
        <taxon>Fungi</taxon>
        <taxon>Dikarya</taxon>
        <taxon>Ascomycota</taxon>
        <taxon>Pezizomycotina</taxon>
        <taxon>Eurotiomycetes</taxon>
        <taxon>Eurotiomycetidae</taxon>
        <taxon>Onygenales</taxon>
        <taxon>Onygenaceae</taxon>
        <taxon>Coccidioides</taxon>
    </lineage>
</organism>
<sequence length="351" mass="38802">MAASSASTSAIQQRVWQGRIPLQIVLSPSECRIYDQSDPYIISIPRLSYLPFILPRLFSFFSSSLIDPDVQAHDGWFSFEGVPLKWHYPVGLLYDLYAGAEPITSKSLSSPGSEREHYVRGGTRENISESGAEGEKDDNHGHDHEFKRDALPWRLMVHFHDWPEQDLIRLDPEGKILHDAFINSVKEADCLRNGTAKRIMALSKEDSSGLWKSVEEHNLPAYHRIHNTLLLPTPPTPFRNIPIRIFLPAPPDSPSPSLKVIQSPIPPLIQPTASPSSSISSASRQMQPQVQTIGTALNSLLPSLFPSKRTPMLAKPVLHGAVVPMSAPVEEVVKCAGYADGWLGVVVSMVG</sequence>
<keyword id="KW-0072">Autophagy</keyword>
<keyword id="KW-1017">Isopeptide bond</keyword>
<keyword id="KW-0472">Membrane</keyword>
<keyword id="KW-0653">Protein transport</keyword>
<keyword id="KW-1185">Reference proteome</keyword>
<keyword id="KW-0813">Transport</keyword>
<keyword id="KW-0832">Ubl conjugation</keyword>
<gene>
    <name type="primary">ATG5</name>
    <name type="ORF">CIMG_07946</name>
</gene>
<dbReference type="EMBL" id="GG704913">
    <property type="protein sequence ID" value="EAS29200.3"/>
    <property type="molecule type" value="Genomic_DNA"/>
</dbReference>
<dbReference type="RefSeq" id="XP_001240783.1">
    <property type="nucleotide sequence ID" value="XM_001240782.2"/>
</dbReference>
<dbReference type="SMR" id="Q1DP17"/>
<dbReference type="FunCoup" id="Q1DP17">
    <property type="interactions" value="317"/>
</dbReference>
<dbReference type="STRING" id="246410.Q1DP17"/>
<dbReference type="GeneID" id="4559549"/>
<dbReference type="KEGG" id="cim:CIMG_07946"/>
<dbReference type="VEuPathDB" id="FungiDB:CIMG_07946"/>
<dbReference type="InParanoid" id="Q1DP17"/>
<dbReference type="OMA" id="SIQKAVW"/>
<dbReference type="OrthoDB" id="272162at2759"/>
<dbReference type="Proteomes" id="UP000001261">
    <property type="component" value="Unassembled WGS sequence"/>
</dbReference>
<dbReference type="GO" id="GO:0034274">
    <property type="term" value="C:Atg12-Atg5-Atg16 complex"/>
    <property type="evidence" value="ECO:0007669"/>
    <property type="project" value="TreeGrafter"/>
</dbReference>
<dbReference type="GO" id="GO:0005776">
    <property type="term" value="C:autophagosome"/>
    <property type="evidence" value="ECO:0007669"/>
    <property type="project" value="TreeGrafter"/>
</dbReference>
<dbReference type="GO" id="GO:0044233">
    <property type="term" value="C:mitochondria-associated endoplasmic reticulum membrane contact site"/>
    <property type="evidence" value="ECO:0007669"/>
    <property type="project" value="TreeGrafter"/>
</dbReference>
<dbReference type="GO" id="GO:0061908">
    <property type="term" value="C:phagophore"/>
    <property type="evidence" value="ECO:0007669"/>
    <property type="project" value="TreeGrafter"/>
</dbReference>
<dbReference type="GO" id="GO:0034045">
    <property type="term" value="C:phagophore assembly site membrane"/>
    <property type="evidence" value="ECO:0007669"/>
    <property type="project" value="UniProtKB-SubCell"/>
</dbReference>
<dbReference type="GO" id="GO:0019776">
    <property type="term" value="F:Atg8-family ligase activity"/>
    <property type="evidence" value="ECO:0007669"/>
    <property type="project" value="TreeGrafter"/>
</dbReference>
<dbReference type="GO" id="GO:0000422">
    <property type="term" value="P:autophagy of mitochondrion"/>
    <property type="evidence" value="ECO:0007669"/>
    <property type="project" value="TreeGrafter"/>
</dbReference>
<dbReference type="GO" id="GO:0006995">
    <property type="term" value="P:cellular response to nitrogen starvation"/>
    <property type="evidence" value="ECO:0007669"/>
    <property type="project" value="TreeGrafter"/>
</dbReference>
<dbReference type="GO" id="GO:0034727">
    <property type="term" value="P:piecemeal microautophagy of the nucleus"/>
    <property type="evidence" value="ECO:0007669"/>
    <property type="project" value="TreeGrafter"/>
</dbReference>
<dbReference type="GO" id="GO:0015031">
    <property type="term" value="P:protein transport"/>
    <property type="evidence" value="ECO:0007669"/>
    <property type="project" value="UniProtKB-KW"/>
</dbReference>
<dbReference type="FunFam" id="3.10.20.620:FF:000004">
    <property type="entry name" value="Autophagy protein 5"/>
    <property type="match status" value="1"/>
</dbReference>
<dbReference type="FunFam" id="3.10.20.90:FF:000290">
    <property type="entry name" value="Autophagy protein 5"/>
    <property type="match status" value="1"/>
</dbReference>
<dbReference type="Gene3D" id="3.10.20.620">
    <property type="match status" value="1"/>
</dbReference>
<dbReference type="Gene3D" id="1.10.246.190">
    <property type="entry name" value="Autophagy protein Apg5, helix rich domain"/>
    <property type="match status" value="1"/>
</dbReference>
<dbReference type="Gene3D" id="3.10.20.90">
    <property type="entry name" value="Phosphatidylinositol 3-kinase Catalytic Subunit, Chain A, domain 1"/>
    <property type="match status" value="1"/>
</dbReference>
<dbReference type="InterPro" id="IPR007239">
    <property type="entry name" value="Atg5"/>
</dbReference>
<dbReference type="InterPro" id="IPR048940">
    <property type="entry name" value="ATG5_HBR"/>
</dbReference>
<dbReference type="InterPro" id="IPR042526">
    <property type="entry name" value="Atg5_HR"/>
</dbReference>
<dbReference type="InterPro" id="IPR048939">
    <property type="entry name" value="ATG5_UblA"/>
</dbReference>
<dbReference type="InterPro" id="IPR042527">
    <property type="entry name" value="Atg5_UblA_dom_sf"/>
</dbReference>
<dbReference type="InterPro" id="IPR048318">
    <property type="entry name" value="ATG5_UblB"/>
</dbReference>
<dbReference type="PANTHER" id="PTHR13040">
    <property type="entry name" value="AUTOPHAGY PROTEIN 5"/>
    <property type="match status" value="1"/>
</dbReference>
<dbReference type="PANTHER" id="PTHR13040:SF2">
    <property type="entry name" value="AUTOPHAGY PROTEIN 5"/>
    <property type="match status" value="1"/>
</dbReference>
<dbReference type="Pfam" id="PF20637">
    <property type="entry name" value="ATG5_HBR"/>
    <property type="match status" value="1"/>
</dbReference>
<dbReference type="Pfam" id="PF20638">
    <property type="entry name" value="ATG5_UblA"/>
    <property type="match status" value="1"/>
</dbReference>
<dbReference type="Pfam" id="PF04106">
    <property type="entry name" value="ATG5_UblB"/>
    <property type="match status" value="1"/>
</dbReference>
<name>ATG5_COCIM</name>
<feature type="chain" id="PRO_0000317854" description="Autophagy protein 5">
    <location>
        <begin position="1"/>
        <end position="351"/>
    </location>
</feature>
<feature type="region of interest" description="Disordered" evidence="2">
    <location>
        <begin position="106"/>
        <end position="143"/>
    </location>
</feature>
<feature type="compositionally biased region" description="Basic and acidic residues" evidence="2">
    <location>
        <begin position="113"/>
        <end position="143"/>
    </location>
</feature>
<feature type="cross-link" description="Glycyl lysine isopeptide (Lys-Gly) (interchain with G-Cter in ATG12)" evidence="1">
    <location>
        <position position="186"/>
    </location>
</feature>
<protein>
    <recommendedName>
        <fullName>Autophagy protein 5</fullName>
    </recommendedName>
</protein>
<proteinExistence type="inferred from homology"/>